<dbReference type="EC" id="2.7.7.6" evidence="1"/>
<dbReference type="EMBL" id="CP000241">
    <property type="protein sequence ID" value="ABF84828.1"/>
    <property type="molecule type" value="Genomic_DNA"/>
</dbReference>
<dbReference type="RefSeq" id="WP_000712202.1">
    <property type="nucleotide sequence ID" value="NC_008086.1"/>
</dbReference>
<dbReference type="SMR" id="Q1CT94"/>
<dbReference type="KEGG" id="hpa:HPAG1_0761"/>
<dbReference type="HOGENOM" id="CLU_125406_3_0_7"/>
<dbReference type="GO" id="GO:0000428">
    <property type="term" value="C:DNA-directed RNA polymerase complex"/>
    <property type="evidence" value="ECO:0007669"/>
    <property type="project" value="UniProtKB-KW"/>
</dbReference>
<dbReference type="GO" id="GO:0003677">
    <property type="term" value="F:DNA binding"/>
    <property type="evidence" value="ECO:0007669"/>
    <property type="project" value="UniProtKB-UniRule"/>
</dbReference>
<dbReference type="GO" id="GO:0003899">
    <property type="term" value="F:DNA-directed RNA polymerase activity"/>
    <property type="evidence" value="ECO:0007669"/>
    <property type="project" value="UniProtKB-UniRule"/>
</dbReference>
<dbReference type="GO" id="GO:0006351">
    <property type="term" value="P:DNA-templated transcription"/>
    <property type="evidence" value="ECO:0007669"/>
    <property type="project" value="UniProtKB-UniRule"/>
</dbReference>
<dbReference type="Gene3D" id="3.90.940.10">
    <property type="match status" value="1"/>
</dbReference>
<dbReference type="HAMAP" id="MF_00366">
    <property type="entry name" value="RNApol_bact_RpoZ"/>
    <property type="match status" value="1"/>
</dbReference>
<dbReference type="InterPro" id="IPR003716">
    <property type="entry name" value="DNA-dir_RNA_pol_omega"/>
</dbReference>
<dbReference type="InterPro" id="IPR006110">
    <property type="entry name" value="Pol_omega/Rpo6/RPB6"/>
</dbReference>
<dbReference type="InterPro" id="IPR036161">
    <property type="entry name" value="RPB6/omega-like_sf"/>
</dbReference>
<dbReference type="NCBIfam" id="NF001579">
    <property type="entry name" value="PRK00392.6-2"/>
    <property type="match status" value="1"/>
</dbReference>
<dbReference type="NCBIfam" id="TIGR00690">
    <property type="entry name" value="rpoZ"/>
    <property type="match status" value="1"/>
</dbReference>
<dbReference type="Pfam" id="PF01192">
    <property type="entry name" value="RNA_pol_Rpb6"/>
    <property type="match status" value="1"/>
</dbReference>
<dbReference type="SMART" id="SM01409">
    <property type="entry name" value="RNA_pol_Rpb6"/>
    <property type="match status" value="1"/>
</dbReference>
<dbReference type="SUPFAM" id="SSF63562">
    <property type="entry name" value="RPB6/omega subunit-like"/>
    <property type="match status" value="1"/>
</dbReference>
<accession>Q1CT94</accession>
<name>RPOZ_HELPH</name>
<sequence>MKKERTESLVAQALKNIGNDRYMLDNLVFARVKQLNAGAKTLVNMDPKRHKLVDIAIREIAEGKIDIDRIDERN</sequence>
<keyword id="KW-0240">DNA-directed RNA polymerase</keyword>
<keyword id="KW-0548">Nucleotidyltransferase</keyword>
<keyword id="KW-0804">Transcription</keyword>
<keyword id="KW-0808">Transferase</keyword>
<reference key="1">
    <citation type="journal article" date="2006" name="Proc. Natl. Acad. Sci. U.S.A.">
        <title>The complete genome sequence of a chronic atrophic gastritis Helicobacter pylori strain: evolution during disease progression.</title>
        <authorList>
            <person name="Oh J.D."/>
            <person name="Kling-Baeckhed H."/>
            <person name="Giannakis M."/>
            <person name="Xu J."/>
            <person name="Fulton R.S."/>
            <person name="Fulton L.A."/>
            <person name="Cordum H.S."/>
            <person name="Wang C."/>
            <person name="Elliott G."/>
            <person name="Edwards J."/>
            <person name="Mardis E.R."/>
            <person name="Engstrand L.G."/>
            <person name="Gordon J.I."/>
        </authorList>
    </citation>
    <scope>NUCLEOTIDE SEQUENCE [LARGE SCALE GENOMIC DNA]</scope>
    <source>
        <strain>HPAG1</strain>
    </source>
</reference>
<proteinExistence type="inferred from homology"/>
<comment type="function">
    <text evidence="1">Promotes RNA polymerase assembly. Latches the N- and C-terminal regions of the beta' subunit thereby facilitating its interaction with the beta and alpha subunits.</text>
</comment>
<comment type="catalytic activity">
    <reaction evidence="1">
        <text>RNA(n) + a ribonucleoside 5'-triphosphate = RNA(n+1) + diphosphate</text>
        <dbReference type="Rhea" id="RHEA:21248"/>
        <dbReference type="Rhea" id="RHEA-COMP:14527"/>
        <dbReference type="Rhea" id="RHEA-COMP:17342"/>
        <dbReference type="ChEBI" id="CHEBI:33019"/>
        <dbReference type="ChEBI" id="CHEBI:61557"/>
        <dbReference type="ChEBI" id="CHEBI:140395"/>
        <dbReference type="EC" id="2.7.7.6"/>
    </reaction>
</comment>
<comment type="subunit">
    <text evidence="1">The RNAP catalytic core consists of 2 alpha, 1 beta, 1 beta' and 1 omega subunit. When a sigma factor is associated with the core the holoenzyme is formed, which can initiate transcription.</text>
</comment>
<comment type="similarity">
    <text evidence="1">Belongs to the RNA polymerase subunit omega family.</text>
</comment>
<organism>
    <name type="scientific">Helicobacter pylori (strain HPAG1)</name>
    <dbReference type="NCBI Taxonomy" id="357544"/>
    <lineage>
        <taxon>Bacteria</taxon>
        <taxon>Pseudomonadati</taxon>
        <taxon>Campylobacterota</taxon>
        <taxon>Epsilonproteobacteria</taxon>
        <taxon>Campylobacterales</taxon>
        <taxon>Helicobacteraceae</taxon>
        <taxon>Helicobacter</taxon>
    </lineage>
</organism>
<gene>
    <name evidence="1" type="primary">rpoZ</name>
    <name type="ordered locus">HPAG1_0761</name>
</gene>
<feature type="chain" id="PRO_1000005939" description="DNA-directed RNA polymerase subunit omega">
    <location>
        <begin position="1"/>
        <end position="74"/>
    </location>
</feature>
<protein>
    <recommendedName>
        <fullName evidence="1">DNA-directed RNA polymerase subunit omega</fullName>
        <shortName evidence="1">RNAP omega subunit</shortName>
        <ecNumber evidence="1">2.7.7.6</ecNumber>
    </recommendedName>
    <alternativeName>
        <fullName evidence="1">RNA polymerase omega subunit</fullName>
    </alternativeName>
    <alternativeName>
        <fullName evidence="1">Transcriptase subunit omega</fullName>
    </alternativeName>
</protein>
<evidence type="ECO:0000255" key="1">
    <source>
        <dbReference type="HAMAP-Rule" id="MF_00366"/>
    </source>
</evidence>